<accession>P10183</accession>
<proteinExistence type="inferred from homology"/>
<dbReference type="EMBL" id="J04233">
    <property type="protein sequence ID" value="AAA25445.1"/>
    <property type="molecule type" value="Genomic_DNA"/>
</dbReference>
<dbReference type="EMBL" id="M22723">
    <property type="protein sequence ID" value="AAA98184.1"/>
    <property type="status" value="ALT_FRAME"/>
    <property type="molecule type" value="Genomic_DNA"/>
</dbReference>
<dbReference type="PIR" id="A31382">
    <property type="entry name" value="A31382"/>
</dbReference>
<dbReference type="PIR" id="A32837">
    <property type="entry name" value="A32837"/>
</dbReference>
<dbReference type="SMR" id="P10183"/>
<dbReference type="GO" id="GO:0005737">
    <property type="term" value="C:cytoplasm"/>
    <property type="evidence" value="ECO:0007669"/>
    <property type="project" value="UniProtKB-SubCell"/>
</dbReference>
<dbReference type="GO" id="GO:0003677">
    <property type="term" value="F:DNA binding"/>
    <property type="evidence" value="ECO:0007669"/>
    <property type="project" value="UniProtKB-KW"/>
</dbReference>
<dbReference type="GO" id="GO:0003700">
    <property type="term" value="F:DNA-binding transcription factor activity"/>
    <property type="evidence" value="ECO:0007669"/>
    <property type="project" value="InterPro"/>
</dbReference>
<dbReference type="GO" id="GO:0009056">
    <property type="term" value="P:catabolic process"/>
    <property type="evidence" value="ECO:0007669"/>
    <property type="project" value="UniProtKB-KW"/>
</dbReference>
<dbReference type="CDD" id="cd08459">
    <property type="entry name" value="PBP2_DntR_NahR_LinR_like"/>
    <property type="match status" value="1"/>
</dbReference>
<dbReference type="Gene3D" id="3.40.190.10">
    <property type="entry name" value="Periplasmic binding protein-like II"/>
    <property type="match status" value="2"/>
</dbReference>
<dbReference type="Gene3D" id="1.10.10.10">
    <property type="entry name" value="Winged helix-like DNA-binding domain superfamily/Winged helix DNA-binding domain"/>
    <property type="match status" value="1"/>
</dbReference>
<dbReference type="InterPro" id="IPR050389">
    <property type="entry name" value="LysR-type_TF"/>
</dbReference>
<dbReference type="InterPro" id="IPR005119">
    <property type="entry name" value="LysR_subst-bd"/>
</dbReference>
<dbReference type="InterPro" id="IPR000847">
    <property type="entry name" value="Tscrpt_reg_HTH_LysR"/>
</dbReference>
<dbReference type="InterPro" id="IPR036388">
    <property type="entry name" value="WH-like_DNA-bd_sf"/>
</dbReference>
<dbReference type="InterPro" id="IPR036390">
    <property type="entry name" value="WH_DNA-bd_sf"/>
</dbReference>
<dbReference type="PANTHER" id="PTHR30118">
    <property type="entry name" value="HTH-TYPE TRANSCRIPTIONAL REGULATOR LEUO-RELATED"/>
    <property type="match status" value="1"/>
</dbReference>
<dbReference type="PANTHER" id="PTHR30118:SF15">
    <property type="entry name" value="TRANSCRIPTIONAL REGULATORY PROTEIN"/>
    <property type="match status" value="1"/>
</dbReference>
<dbReference type="Pfam" id="PF00126">
    <property type="entry name" value="HTH_1"/>
    <property type="match status" value="1"/>
</dbReference>
<dbReference type="Pfam" id="PF03466">
    <property type="entry name" value="LysR_substrate"/>
    <property type="match status" value="1"/>
</dbReference>
<dbReference type="PRINTS" id="PR00039">
    <property type="entry name" value="HTHLYSR"/>
</dbReference>
<dbReference type="SUPFAM" id="SSF53850">
    <property type="entry name" value="Periplasmic binding protein-like II"/>
    <property type="match status" value="1"/>
</dbReference>
<dbReference type="SUPFAM" id="SSF46785">
    <property type="entry name" value="Winged helix' DNA-binding domain"/>
    <property type="match status" value="1"/>
</dbReference>
<dbReference type="PROSITE" id="PS50931">
    <property type="entry name" value="HTH_LYSR"/>
    <property type="match status" value="1"/>
</dbReference>
<organism>
    <name type="scientific">Pseudomonas putida</name>
    <name type="common">Arthrobacter siderocapsulatus</name>
    <dbReference type="NCBI Taxonomy" id="303"/>
    <lineage>
        <taxon>Bacteria</taxon>
        <taxon>Pseudomonadati</taxon>
        <taxon>Pseudomonadota</taxon>
        <taxon>Gammaproteobacteria</taxon>
        <taxon>Pseudomonadales</taxon>
        <taxon>Pseudomonadaceae</taxon>
        <taxon>Pseudomonas</taxon>
    </lineage>
</organism>
<reference key="1">
    <citation type="journal article" date="1989" name="J. Bacteriol.">
        <title>Evidence that the transcription activator encoded by the Pseudomonas putida nahR gene is evolutionarily related to the transcription activators encoded by the Rhizobium nodD genes.</title>
        <authorList>
            <person name="Schell M.A."/>
            <person name="Sukordhaman M."/>
        </authorList>
    </citation>
    <scope>NUCLEOTIDE SEQUENCE [GENOMIC DNA]</scope>
</reference>
<reference key="2">
    <citation type="journal article" date="1988" name="J. Bacteriol.">
        <title>Nucleotide sequence of plasmid NAH7 gene nahR and DNA binding of the nahR product.</title>
        <authorList>
            <person name="You I.-S."/>
            <person name="Ghosal D."/>
            <person name="Gunsalus I.C."/>
        </authorList>
    </citation>
    <scope>NUCLEOTIDE SEQUENCE [GENOMIC DNA]</scope>
</reference>
<name>NAHR_PSEPU</name>
<feature type="chain" id="PRO_0000105688" description="HTH-type transcriptional activator NahR">
    <location>
        <begin position="1"/>
        <end position="300"/>
    </location>
</feature>
<feature type="domain" description="HTH lysR-type" evidence="1">
    <location>
        <begin position="6"/>
        <end position="63"/>
    </location>
</feature>
<feature type="DNA-binding region" description="H-T-H motif" evidence="1">
    <location>
        <begin position="23"/>
        <end position="42"/>
    </location>
</feature>
<geneLocation type="plasmid">
    <name>NAH7</name>
</geneLocation>
<sequence length="300" mass="33932">MELRDLDLNLLVVFNQLLVDRRVSITAENLGLTQPAVSNALKRLRTSLQDPLFVRTHQGMEPTPYAAHLAEPVTSAMHALRNALQHHESFDPLTSERTFTLAMTDIGEIYFMPRLMDVLAHQAPNCVISTVRDSSMSLMQALQNGTVDLAVGLLPNLQTGFFQRRLLQNHYVCLCRKDHPVTREPLTLERFCSYGHVRVIAAGTGHGEVDTYMTRVGIRRDIRLEVPHFAAVGHILQRTDLLATVPIRLADCCVEPFGLSALPHPVVLPEIAINMFWHAKYHKDLANIWLRQLMFDLFTD</sequence>
<keyword id="KW-0010">Activator</keyword>
<keyword id="KW-0058">Aromatic hydrocarbons catabolism</keyword>
<keyword id="KW-0963">Cytoplasm</keyword>
<keyword id="KW-0238">DNA-binding</keyword>
<keyword id="KW-0614">Plasmid</keyword>
<keyword id="KW-0804">Transcription</keyword>
<keyword id="KW-0805">Transcription regulation</keyword>
<evidence type="ECO:0000255" key="1">
    <source>
        <dbReference type="PROSITE-ProRule" id="PRU00253"/>
    </source>
</evidence>
<evidence type="ECO:0000305" key="2"/>
<gene>
    <name type="primary">nahR</name>
</gene>
<protein>
    <recommendedName>
        <fullName>HTH-type transcriptional activator NahR</fullName>
    </recommendedName>
</protein>
<comment type="function">
    <text>Regulates the expression of the naphthalene (nahA-F) and salicylate (nahG-M) metabolism genes.</text>
</comment>
<comment type="subcellular location">
    <subcellularLocation>
        <location>Cytoplasm</location>
    </subcellularLocation>
</comment>
<comment type="similarity">
    <text evidence="2">Belongs to the LysR transcriptional regulatory family.</text>
</comment>
<comment type="sequence caution" evidence="2">
    <conflict type="frameshift">
        <sequence resource="EMBL-CDS" id="AAA98184"/>
    </conflict>
</comment>